<comment type="function">
    <text evidence="1 4">Involved in the assembly of mitochondrial NADH:ubiquinone oxidoreductase complex (complex I, MT-ND1) at early stages (PubMed:23536703). Probably acts as an arginine hydroxylase (By similarity). May also have methyltransferase activity.</text>
</comment>
<comment type="subcellular location">
    <subcellularLocation>
        <location evidence="4">Mitochondrion</location>
    </subcellularLocation>
</comment>
<comment type="disruption phenotype">
    <text evidence="4">Defects in development due to mitochondrial NADH:ubiquinone oxidoreductase complex (complex I, MT-ND1) deficiency (PubMed:23536703). Increased autophagy (PubMed:23536703).</text>
</comment>
<comment type="similarity">
    <text evidence="6">Belongs to the methyltransferase superfamily.</text>
</comment>
<proteinExistence type="evidence at protein level"/>
<organism>
    <name type="scientific">Dictyostelium discoideum</name>
    <name type="common">Social amoeba</name>
    <dbReference type="NCBI Taxonomy" id="44689"/>
    <lineage>
        <taxon>Eukaryota</taxon>
        <taxon>Amoebozoa</taxon>
        <taxon>Evosea</taxon>
        <taxon>Eumycetozoa</taxon>
        <taxon>Dictyostelia</taxon>
        <taxon>Dictyosteliales</taxon>
        <taxon>Dictyosteliaceae</taxon>
        <taxon>Dictyostelium</taxon>
    </lineage>
</organism>
<accession>Q54JW0</accession>
<keyword id="KW-0489">Methyltransferase</keyword>
<keyword id="KW-0496">Mitochondrion</keyword>
<keyword id="KW-0560">Oxidoreductase</keyword>
<keyword id="KW-1185">Reference proteome</keyword>
<keyword id="KW-0808">Transferase</keyword>
<keyword id="KW-0809">Transit peptide</keyword>
<name>NDUF5_DICDI</name>
<sequence length="436" mass="50194">MLRTTFRKGFNLKCFSKDWNQTRQYSNYTKMTIFDTNVKTIQKNNTVTNVDDPKHYDYLMNEVADRLADRILDIKDIKCGNVLDFGSRNGALFKYIQEKGAKIDKYYMVESSKELLYRDDNNVSQENEDDNNNNKVKPTKILVNSLEDKIEGIEDQSLDLIISNLSLHWVNDLPGVFGGLKRLLKPNGVFLASLFGEDTLMELKDSLYLAEIEREGGFSPHVSPFTKISDIGNILSKNRYTLPTVDTEKITINYDNMFVLMRDLQNMGENNAILKRRNYTSKDTFLAASAIYKHLYGNEDNNSIPATFQIIYLIGWAPHESQQKPLQRGSAKKHFSEISGTSSFGYKFDNDSSIPSILTNENNSVTLSQQQQQQGIEPQQSNDDSINEPFPKTDDFVIKRLDYHGNFHFEKQQQQQQQQDQNKESSDEINKNKDDK</sequence>
<dbReference type="EC" id="1.-.-.-" evidence="1"/>
<dbReference type="EC" id="2.1.1.-" evidence="6"/>
<dbReference type="EMBL" id="AAFI02000104">
    <property type="protein sequence ID" value="EAL63531.1"/>
    <property type="molecule type" value="Genomic_DNA"/>
</dbReference>
<dbReference type="RefSeq" id="XP_637042.1">
    <property type="nucleotide sequence ID" value="XM_631950.1"/>
</dbReference>
<dbReference type="SMR" id="Q54JW0"/>
<dbReference type="FunCoup" id="Q54JW0">
    <property type="interactions" value="249"/>
</dbReference>
<dbReference type="STRING" id="44689.Q54JW0"/>
<dbReference type="PaxDb" id="44689-DDB0187624"/>
<dbReference type="EnsemblProtists" id="EAL63531">
    <property type="protein sequence ID" value="EAL63531"/>
    <property type="gene ID" value="DDB_G0287769"/>
</dbReference>
<dbReference type="GeneID" id="8626296"/>
<dbReference type="KEGG" id="ddi:DDB_G0287769"/>
<dbReference type="dictyBase" id="DDB_G0287769">
    <property type="gene designation" value="ndufaf5"/>
</dbReference>
<dbReference type="VEuPathDB" id="AmoebaDB:DDB_G0287769"/>
<dbReference type="eggNOG" id="KOG2940">
    <property type="taxonomic scope" value="Eukaryota"/>
</dbReference>
<dbReference type="HOGENOM" id="CLU_046586_0_0_1"/>
<dbReference type="InParanoid" id="Q54JW0"/>
<dbReference type="OMA" id="QCCTRIR"/>
<dbReference type="PhylomeDB" id="Q54JW0"/>
<dbReference type="PRO" id="PR:Q54JW0"/>
<dbReference type="Proteomes" id="UP000002195">
    <property type="component" value="Chromosome 5"/>
</dbReference>
<dbReference type="GO" id="GO:0005739">
    <property type="term" value="C:mitochondrion"/>
    <property type="evidence" value="ECO:0000314"/>
    <property type="project" value="dictyBase"/>
</dbReference>
<dbReference type="GO" id="GO:0008168">
    <property type="term" value="F:methyltransferase activity"/>
    <property type="evidence" value="ECO:0007669"/>
    <property type="project" value="UniProtKB-KW"/>
</dbReference>
<dbReference type="GO" id="GO:0016491">
    <property type="term" value="F:oxidoreductase activity"/>
    <property type="evidence" value="ECO:0007669"/>
    <property type="project" value="UniProtKB-KW"/>
</dbReference>
<dbReference type="GO" id="GO:0031154">
    <property type="term" value="P:culmination involved in sorocarp development"/>
    <property type="evidence" value="ECO:0000315"/>
    <property type="project" value="dictyBase"/>
</dbReference>
<dbReference type="GO" id="GO:0032259">
    <property type="term" value="P:methylation"/>
    <property type="evidence" value="ECO:0007669"/>
    <property type="project" value="UniProtKB-KW"/>
</dbReference>
<dbReference type="GO" id="GO:0032981">
    <property type="term" value="P:mitochondrial respiratory chain complex I assembly"/>
    <property type="evidence" value="ECO:0000315"/>
    <property type="project" value="dictyBase"/>
</dbReference>
<dbReference type="GO" id="GO:0010507">
    <property type="term" value="P:negative regulation of autophagy"/>
    <property type="evidence" value="ECO:0000315"/>
    <property type="project" value="dictyBase"/>
</dbReference>
<dbReference type="GO" id="GO:0042331">
    <property type="term" value="P:phototaxis"/>
    <property type="evidence" value="ECO:0000315"/>
    <property type="project" value="dictyBase"/>
</dbReference>
<dbReference type="GO" id="GO:0030435">
    <property type="term" value="P:sporulation resulting in formation of a cellular spore"/>
    <property type="evidence" value="ECO:0000315"/>
    <property type="project" value="dictyBase"/>
</dbReference>
<dbReference type="CDD" id="cd02440">
    <property type="entry name" value="AdoMet_MTases"/>
    <property type="match status" value="1"/>
</dbReference>
<dbReference type="FunFam" id="3.40.50.150:FF:000199">
    <property type="entry name" value="arginine-hydroxylase NDUFAF5, mitochondrial isoform X1"/>
    <property type="match status" value="1"/>
</dbReference>
<dbReference type="Gene3D" id="3.40.50.150">
    <property type="entry name" value="Vaccinia Virus protein VP39"/>
    <property type="match status" value="1"/>
</dbReference>
<dbReference type="InterPro" id="IPR050602">
    <property type="entry name" value="Malonyl-ACP_OMT"/>
</dbReference>
<dbReference type="InterPro" id="IPR029063">
    <property type="entry name" value="SAM-dependent_MTases_sf"/>
</dbReference>
<dbReference type="PANTHER" id="PTHR13090">
    <property type="entry name" value="ARGININE-HYDROXYLASE NDUFAF5, MITOCHONDRIAL"/>
    <property type="match status" value="1"/>
</dbReference>
<dbReference type="PANTHER" id="PTHR13090:SF1">
    <property type="entry name" value="ARGININE-HYDROXYLASE NDUFAF5, MITOCHONDRIAL"/>
    <property type="match status" value="1"/>
</dbReference>
<dbReference type="Pfam" id="PF13489">
    <property type="entry name" value="Methyltransf_23"/>
    <property type="match status" value="1"/>
</dbReference>
<dbReference type="SUPFAM" id="SSF53335">
    <property type="entry name" value="S-adenosyl-L-methionine-dependent methyltransferases"/>
    <property type="match status" value="1"/>
</dbReference>
<gene>
    <name evidence="5" type="primary">ndufaf5</name>
    <name type="ORF">DDB_G0287769</name>
</gene>
<protein>
    <recommendedName>
        <fullName>Arginine-hydroxylase NDUFAF5, mitochondrial</fullName>
        <ecNumber evidence="1">1.-.-.-</ecNumber>
    </recommendedName>
    <alternativeName>
        <fullName evidence="1">NADH dehydrogenase [ubiquinone] 1 alpha subcomplex assembly factor 5</fullName>
    </alternativeName>
    <alternativeName>
        <fullName evidence="6">Putative methyltransferase NDUFAF5</fullName>
        <ecNumber evidence="6">2.1.1.-</ecNumber>
    </alternativeName>
</protein>
<evidence type="ECO:0000250" key="1">
    <source>
        <dbReference type="UniProtKB" id="Q5TEU4"/>
    </source>
</evidence>
<evidence type="ECO:0000255" key="2"/>
<evidence type="ECO:0000256" key="3">
    <source>
        <dbReference type="SAM" id="MobiDB-lite"/>
    </source>
</evidence>
<evidence type="ECO:0000269" key="4">
    <source>
    </source>
</evidence>
<evidence type="ECO:0000303" key="5">
    <source>
    </source>
</evidence>
<evidence type="ECO:0000305" key="6"/>
<reference key="1">
    <citation type="journal article" date="2005" name="Nature">
        <title>The genome of the social amoeba Dictyostelium discoideum.</title>
        <authorList>
            <person name="Eichinger L."/>
            <person name="Pachebat J.A."/>
            <person name="Gloeckner G."/>
            <person name="Rajandream M.A."/>
            <person name="Sucgang R."/>
            <person name="Berriman M."/>
            <person name="Song J."/>
            <person name="Olsen R."/>
            <person name="Szafranski K."/>
            <person name="Xu Q."/>
            <person name="Tunggal B."/>
            <person name="Kummerfeld S."/>
            <person name="Madera M."/>
            <person name="Konfortov B.A."/>
            <person name="Rivero F."/>
            <person name="Bankier A.T."/>
            <person name="Lehmann R."/>
            <person name="Hamlin N."/>
            <person name="Davies R."/>
            <person name="Gaudet P."/>
            <person name="Fey P."/>
            <person name="Pilcher K."/>
            <person name="Chen G."/>
            <person name="Saunders D."/>
            <person name="Sodergren E.J."/>
            <person name="Davis P."/>
            <person name="Kerhornou A."/>
            <person name="Nie X."/>
            <person name="Hall N."/>
            <person name="Anjard C."/>
            <person name="Hemphill L."/>
            <person name="Bason N."/>
            <person name="Farbrother P."/>
            <person name="Desany B."/>
            <person name="Just E."/>
            <person name="Morio T."/>
            <person name="Rost R."/>
            <person name="Churcher C.M."/>
            <person name="Cooper J."/>
            <person name="Haydock S."/>
            <person name="van Driessche N."/>
            <person name="Cronin A."/>
            <person name="Goodhead I."/>
            <person name="Muzny D.M."/>
            <person name="Mourier T."/>
            <person name="Pain A."/>
            <person name="Lu M."/>
            <person name="Harper D."/>
            <person name="Lindsay R."/>
            <person name="Hauser H."/>
            <person name="James K.D."/>
            <person name="Quiles M."/>
            <person name="Madan Babu M."/>
            <person name="Saito T."/>
            <person name="Buchrieser C."/>
            <person name="Wardroper A."/>
            <person name="Felder M."/>
            <person name="Thangavelu M."/>
            <person name="Johnson D."/>
            <person name="Knights A."/>
            <person name="Loulseged H."/>
            <person name="Mungall K.L."/>
            <person name="Oliver K."/>
            <person name="Price C."/>
            <person name="Quail M.A."/>
            <person name="Urushihara H."/>
            <person name="Hernandez J."/>
            <person name="Rabbinowitsch E."/>
            <person name="Steffen D."/>
            <person name="Sanders M."/>
            <person name="Ma J."/>
            <person name="Kohara Y."/>
            <person name="Sharp S."/>
            <person name="Simmonds M.N."/>
            <person name="Spiegler S."/>
            <person name="Tivey A."/>
            <person name="Sugano S."/>
            <person name="White B."/>
            <person name="Walker D."/>
            <person name="Woodward J.R."/>
            <person name="Winckler T."/>
            <person name="Tanaka Y."/>
            <person name="Shaulsky G."/>
            <person name="Schleicher M."/>
            <person name="Weinstock G.M."/>
            <person name="Rosenthal A."/>
            <person name="Cox E.C."/>
            <person name="Chisholm R.L."/>
            <person name="Gibbs R.A."/>
            <person name="Loomis W.F."/>
            <person name="Platzer M."/>
            <person name="Kay R.R."/>
            <person name="Williams J.G."/>
            <person name="Dear P.H."/>
            <person name="Noegel A.A."/>
            <person name="Barrell B.G."/>
            <person name="Kuspa A."/>
        </authorList>
    </citation>
    <scope>NUCLEOTIDE SEQUENCE [LARGE SCALE GENOMIC DNA]</scope>
    <source>
        <strain>AX4</strain>
    </source>
</reference>
<reference key="2">
    <citation type="journal article" date="2013" name="Mol. Biol. Cell">
        <title>Ndufaf5 deficiency in the Dictyostelium model: new roles in autophagy and development.</title>
        <authorList>
            <person name="Carilla-Latorre S."/>
            <person name="Annesley S.J."/>
            <person name="Munoz-Braceras S."/>
            <person name="Fisher P.R."/>
            <person name="Escalante R."/>
        </authorList>
    </citation>
    <scope>FUNCTION</scope>
    <scope>SUBCELLULAR LOCATION</scope>
    <scope>DISRUPTION PHENOTYPE</scope>
    <scope>MUTAGENESIS OF GLY-86; LEU-165 AND LEU-235</scope>
</reference>
<feature type="transit peptide" description="Mitochondrion" evidence="2">
    <location>
        <begin position="1"/>
        <end position="25"/>
    </location>
</feature>
<feature type="chain" id="PRO_0000356856" description="Arginine-hydroxylase NDUFAF5, mitochondrial">
    <location>
        <begin position="26"/>
        <end position="436"/>
    </location>
</feature>
<feature type="region of interest" description="Disordered" evidence="3">
    <location>
        <begin position="365"/>
        <end position="436"/>
    </location>
</feature>
<feature type="compositionally biased region" description="Low complexity" evidence="3">
    <location>
        <begin position="369"/>
        <end position="380"/>
    </location>
</feature>
<feature type="compositionally biased region" description="Basic and acidic residues" evidence="3">
    <location>
        <begin position="391"/>
        <end position="411"/>
    </location>
</feature>
<feature type="compositionally biased region" description="Basic and acidic residues" evidence="3">
    <location>
        <begin position="421"/>
        <end position="436"/>
    </location>
</feature>
<feature type="mutagenesis site" description="Unable to complement a ndufaf5 mutant strain." evidence="4">
    <original>G</original>
    <variation>V</variation>
    <location>
        <position position="86"/>
    </location>
</feature>
<feature type="mutagenesis site" description="Unable to complement a ndufaf5 mutant strain." evidence="4">
    <original>L</original>
    <variation>F</variation>
    <location>
        <position position="165"/>
    </location>
</feature>
<feature type="mutagenesis site" description="Unable to complement a ndufaf5 mutant strain." evidence="4">
    <original>L</original>
    <variation>P</variation>
    <location>
        <position position="235"/>
    </location>
</feature>